<proteinExistence type="evidence at protein level"/>
<protein>
    <recommendedName>
        <fullName>Neurophysin 2</fullName>
    </recommendedName>
    <alternativeName>
        <fullName>MSEL-neurophysin</fullName>
    </alternativeName>
</protein>
<sequence length="131" mass="13326">ALADTALRQCLPCGPGNRGRCFGPGICCGVELGGCYVGTAETRRCAEEDYLPSPCQPGGQPCGSGGRCAADGVCCSADTCAADASCLEEGSERAEEAAEKNLTVLDGSAGDLLLRLMQLAGRQQGRQPGLL</sequence>
<accession>P19630</accession>
<feature type="chain" id="PRO_0000160938" description="Neurophysin 2">
    <location>
        <begin position="1"/>
        <end position="131"/>
    </location>
</feature>
<feature type="disulfide bond" evidence="1">
    <location>
        <begin position="10"/>
        <end position="55"/>
    </location>
</feature>
<feature type="disulfide bond" evidence="1">
    <location>
        <begin position="13"/>
        <end position="27"/>
    </location>
</feature>
<feature type="disulfide bond" evidence="1">
    <location>
        <begin position="21"/>
        <end position="45"/>
    </location>
</feature>
<feature type="disulfide bond" evidence="1">
    <location>
        <begin position="28"/>
        <end position="35"/>
    </location>
</feature>
<feature type="disulfide bond" evidence="1">
    <location>
        <begin position="62"/>
        <end position="74"/>
    </location>
</feature>
<feature type="disulfide bond" evidence="1">
    <location>
        <begin position="68"/>
        <end position="86"/>
    </location>
</feature>
<feature type="disulfide bond" evidence="1">
    <location>
        <begin position="75"/>
        <end position="80"/>
    </location>
</feature>
<dbReference type="PIR" id="A43980">
    <property type="entry name" value="A43980"/>
</dbReference>
<dbReference type="SMR" id="P19630"/>
<dbReference type="GO" id="GO:0005615">
    <property type="term" value="C:extracellular space"/>
    <property type="evidence" value="ECO:0007669"/>
    <property type="project" value="TreeGrafter"/>
</dbReference>
<dbReference type="GO" id="GO:0030141">
    <property type="term" value="C:secretory granule"/>
    <property type="evidence" value="ECO:0007669"/>
    <property type="project" value="TreeGrafter"/>
</dbReference>
<dbReference type="GO" id="GO:0005185">
    <property type="term" value="F:neurohypophyseal hormone activity"/>
    <property type="evidence" value="ECO:0007669"/>
    <property type="project" value="InterPro"/>
</dbReference>
<dbReference type="FunFam" id="2.60.9.10:FF:000001">
    <property type="entry name" value="oxytocin-neurophysin 1"/>
    <property type="match status" value="1"/>
</dbReference>
<dbReference type="Gene3D" id="2.60.9.10">
    <property type="entry name" value="Neurohypophysial hormone domain"/>
    <property type="match status" value="1"/>
</dbReference>
<dbReference type="InterPro" id="IPR000981">
    <property type="entry name" value="Neurhyp_horm"/>
</dbReference>
<dbReference type="InterPro" id="IPR036387">
    <property type="entry name" value="Neurhyp_horm_dom_sf"/>
</dbReference>
<dbReference type="PANTHER" id="PTHR11681">
    <property type="entry name" value="NEUROPHYSIN"/>
    <property type="match status" value="1"/>
</dbReference>
<dbReference type="PANTHER" id="PTHR11681:SF15">
    <property type="entry name" value="VASOTOCIN-NEUROPHYSIN VT"/>
    <property type="match status" value="1"/>
</dbReference>
<dbReference type="Pfam" id="PF00184">
    <property type="entry name" value="Hormone_5"/>
    <property type="match status" value="1"/>
</dbReference>
<dbReference type="PIRSF" id="PIRSF001815">
    <property type="entry name" value="Nonapeptide_hormone_precursor"/>
    <property type="match status" value="1"/>
</dbReference>
<dbReference type="PRINTS" id="PR00831">
    <property type="entry name" value="NEUROPHYSIN"/>
</dbReference>
<dbReference type="SMART" id="SM00003">
    <property type="entry name" value="NH"/>
    <property type="match status" value="1"/>
</dbReference>
<dbReference type="SUPFAM" id="SSF49606">
    <property type="entry name" value="Neurophysin II"/>
    <property type="match status" value="1"/>
</dbReference>
<keyword id="KW-0165">Cleavage on pair of basic residues</keyword>
<keyword id="KW-0903">Direct protein sequencing</keyword>
<keyword id="KW-1015">Disulfide bond</keyword>
<keyword id="KW-0964">Secreted</keyword>
<reference key="1">
    <citation type="journal article" date="1990" name="Int. J. Pept. Protein Res.">
        <title>Non-mammalian 'big' neurophysins -- complete amino acid sequence of a two-domain MSEL-neurophysin from goose.</title>
        <authorList>
            <person name="Michel G."/>
            <person name="Levy B."/>
            <person name="Chauvet M.-T."/>
            <person name="Chauvet J."/>
            <person name="Acher R."/>
        </authorList>
    </citation>
    <scope>PROTEIN SEQUENCE</scope>
</reference>
<organism>
    <name type="scientific">Anser anser anser</name>
    <name type="common">Western greylag goose</name>
    <dbReference type="NCBI Taxonomy" id="8844"/>
    <lineage>
        <taxon>Eukaryota</taxon>
        <taxon>Metazoa</taxon>
        <taxon>Chordata</taxon>
        <taxon>Craniata</taxon>
        <taxon>Vertebrata</taxon>
        <taxon>Euteleostomi</taxon>
        <taxon>Archelosauria</taxon>
        <taxon>Archosauria</taxon>
        <taxon>Dinosauria</taxon>
        <taxon>Saurischia</taxon>
        <taxon>Theropoda</taxon>
        <taxon>Coelurosauria</taxon>
        <taxon>Aves</taxon>
        <taxon>Neognathae</taxon>
        <taxon>Galloanserae</taxon>
        <taxon>Anseriformes</taxon>
        <taxon>Anatidae</taxon>
        <taxon>Anserinae</taxon>
        <taxon>Anser</taxon>
    </lineage>
</organism>
<name>NEU2_ANSAN</name>
<evidence type="ECO:0000250" key="1">
    <source>
        <dbReference type="UniProtKB" id="P01175"/>
    </source>
</evidence>
<evidence type="ECO:0000305" key="2"/>
<comment type="function">
    <text>Neurophysin 2 specifically binds vasopressin.</text>
</comment>
<comment type="subcellular location">
    <subcellularLocation>
        <location>Secreted</location>
    </subcellularLocation>
</comment>
<comment type="similarity">
    <text evidence="2">Belongs to the vasopressin/oxytocin family.</text>
</comment>